<accession>A9ALD3</accession>
<comment type="function">
    <text evidence="2">Catalyzes the reduction of Delta(1)-pyrroline-2-carboxylate (Pyr2C) to L-proline, using NADPH as the electron donor. May be involved in a degradation pathway that converts trans-3-hydroxy-L-proline (t3LHyp) to L-proline.</text>
</comment>
<comment type="catalytic activity">
    <reaction evidence="2">
        <text>L-proline + NAD(+) = 1-pyrroline-2-carboxylate + NADH + H(+)</text>
        <dbReference type="Rhea" id="RHEA:20321"/>
        <dbReference type="ChEBI" id="CHEBI:15378"/>
        <dbReference type="ChEBI" id="CHEBI:39785"/>
        <dbReference type="ChEBI" id="CHEBI:57540"/>
        <dbReference type="ChEBI" id="CHEBI:57945"/>
        <dbReference type="ChEBI" id="CHEBI:60039"/>
        <dbReference type="EC" id="1.5.1.49"/>
    </reaction>
</comment>
<comment type="catalytic activity">
    <reaction evidence="2">
        <text>L-proline + NADP(+) = 1-pyrroline-2-carboxylate + NADPH + H(+)</text>
        <dbReference type="Rhea" id="RHEA:20317"/>
        <dbReference type="ChEBI" id="CHEBI:15378"/>
        <dbReference type="ChEBI" id="CHEBI:39785"/>
        <dbReference type="ChEBI" id="CHEBI:57783"/>
        <dbReference type="ChEBI" id="CHEBI:58349"/>
        <dbReference type="ChEBI" id="CHEBI:60039"/>
        <dbReference type="EC" id="1.5.1.49"/>
    </reaction>
</comment>
<comment type="biophysicochemical properties">
    <kinetics>
        <KM evidence="2">7.4 mM for Delta(1)-pyrroline-2-carboxylate (using NADPH as cosubstrate)</KM>
        <text evidence="2">kcat is 33 sec(-1) for Pyr2C reduction using NADPH.</text>
    </kinetics>
</comment>
<comment type="subunit">
    <text evidence="1">Homodimer.</text>
</comment>
<comment type="similarity">
    <text evidence="4">Belongs to the LDH2/MDH2 oxidoreductase family.</text>
</comment>
<reference key="1">
    <citation type="submission" date="2007-10" db="EMBL/GenBank/DDBJ databases">
        <title>Complete sequence of chromosome 2 of Burkholderia multivorans ATCC 17616.</title>
        <authorList>
            <person name="Copeland A."/>
            <person name="Lucas S."/>
            <person name="Lapidus A."/>
            <person name="Barry K."/>
            <person name="Glavina del Rio T."/>
            <person name="Dalin E."/>
            <person name="Tice H."/>
            <person name="Pitluck S."/>
            <person name="Chain P."/>
            <person name="Malfatti S."/>
            <person name="Shin M."/>
            <person name="Vergez L."/>
            <person name="Schmutz J."/>
            <person name="Larimer F."/>
            <person name="Land M."/>
            <person name="Hauser L."/>
            <person name="Kyrpides N."/>
            <person name="Kim E."/>
            <person name="Tiedje J."/>
            <person name="Richardson P."/>
        </authorList>
    </citation>
    <scope>NUCLEOTIDE SEQUENCE [LARGE SCALE GENOMIC DNA]</scope>
    <source>
        <strain>ATCC 17616 / 249</strain>
    </source>
</reference>
<reference key="2">
    <citation type="submission" date="2007-04" db="EMBL/GenBank/DDBJ databases">
        <title>Complete genome sequence of Burkholderia multivorans ATCC 17616.</title>
        <authorList>
            <person name="Ohtsubo Y."/>
            <person name="Yamashita A."/>
            <person name="Kurokawa K."/>
            <person name="Takami H."/>
            <person name="Yuhara S."/>
            <person name="Nishiyama E."/>
            <person name="Endo R."/>
            <person name="Miyazaki R."/>
            <person name="Ono A."/>
            <person name="Yano K."/>
            <person name="Ito M."/>
            <person name="Sota M."/>
            <person name="Yuji N."/>
            <person name="Hattori M."/>
            <person name="Tsuda M."/>
        </authorList>
    </citation>
    <scope>NUCLEOTIDE SEQUENCE [LARGE SCALE GENOMIC DNA]</scope>
    <source>
        <strain>ATCC 17616 / 249</strain>
    </source>
</reference>
<reference key="3">
    <citation type="journal article" date="2014" name="Elife">
        <title>Prediction and characterization of enzymatic activities guided by sequence similarity and genome neighborhood networks.</title>
        <authorList>
            <person name="Zhao S."/>
            <person name="Sakai A."/>
            <person name="Zhang X."/>
            <person name="Vetting M.W."/>
            <person name="Kumar R."/>
            <person name="Hillerich B."/>
            <person name="San Francisco B."/>
            <person name="Solbiati J."/>
            <person name="Steves A."/>
            <person name="Brown S."/>
            <person name="Akiva E."/>
            <person name="Barber A."/>
            <person name="Seidel R.D."/>
            <person name="Babbitt P.C."/>
            <person name="Almo S.C."/>
            <person name="Gerlt J.A."/>
            <person name="Jacobson M.P."/>
        </authorList>
    </citation>
    <scope>FUNCTION</scope>
    <scope>CATALYTIC ACTIVITY</scope>
    <scope>BIOPHYSICOCHEMICAL PROPERTIES</scope>
</reference>
<evidence type="ECO:0000250" key="1">
    <source>
        <dbReference type="UniProtKB" id="Q4U331"/>
    </source>
</evidence>
<evidence type="ECO:0000269" key="2">
    <source>
    </source>
</evidence>
<evidence type="ECO:0000303" key="3">
    <source>
    </source>
</evidence>
<evidence type="ECO:0000305" key="4"/>
<evidence type="ECO:0000312" key="5">
    <source>
        <dbReference type="EMBL" id="ABX18130.1"/>
    </source>
</evidence>
<evidence type="ECO:0000312" key="6">
    <source>
        <dbReference type="EMBL" id="BAG45916.1"/>
    </source>
</evidence>
<organism>
    <name type="scientific">Burkholderia multivorans (strain ATCC 17616 / 249)</name>
    <dbReference type="NCBI Taxonomy" id="395019"/>
    <lineage>
        <taxon>Bacteria</taxon>
        <taxon>Pseudomonadati</taxon>
        <taxon>Pseudomonadota</taxon>
        <taxon>Betaproteobacteria</taxon>
        <taxon>Burkholderiales</taxon>
        <taxon>Burkholderiaceae</taxon>
        <taxon>Burkholderia</taxon>
        <taxon>Burkholderia cepacia complex</taxon>
    </lineage>
</organism>
<name>PYCR2_BURM1</name>
<sequence>MAEPIDAVVLSLDEVHALALRVLTHHGLSDAHARAIANVITQGQRDECHSHGVYRLLVCVRSLRKGKVDPQAVPTLRRLSSSIVAVDAHRGFSLLSFETGLPVLVEMTKQHGIAAMVINRCYHFSALWPEVEAIAAEGLVGIAMNPSHSWVAPEGGKEPVFGTNPIAFAWPRPGGMPFVFDFATSAIARGDIELHAKQGKPIPPEWAIDAQGRPTTDPQAALQGAMRTFGGHKGSALAAMVELLGGALIGDLTSRESMDFDEGVGATPCHGELAIAFDPKVFLGDDLDAGLARGERMFDSIVAQGARLPSQRRFDARARSIANGVRIPRALYDEIVALLD</sequence>
<gene>
    <name evidence="6" type="primary">ybiC</name>
    <name evidence="5" type="ordered locus">Bmul_4451</name>
    <name evidence="6" type="ordered locus">BMULJ_04059</name>
</gene>
<keyword id="KW-0521">NADP</keyword>
<keyword id="KW-0560">Oxidoreductase</keyword>
<keyword id="KW-1185">Reference proteome</keyword>
<dbReference type="EC" id="1.5.1.49" evidence="2"/>
<dbReference type="EMBL" id="CP000869">
    <property type="protein sequence ID" value="ABX18130.1"/>
    <property type="molecule type" value="Genomic_DNA"/>
</dbReference>
<dbReference type="EMBL" id="AP009386">
    <property type="protein sequence ID" value="BAG45916.1"/>
    <property type="molecule type" value="Genomic_DNA"/>
</dbReference>
<dbReference type="RefSeq" id="WP_012217164.1">
    <property type="nucleotide sequence ID" value="NC_010086.1"/>
</dbReference>
<dbReference type="SMR" id="A9ALD3"/>
<dbReference type="STRING" id="395019.BMULJ_04059"/>
<dbReference type="KEGG" id="bmj:BMULJ_04059"/>
<dbReference type="KEGG" id="bmu:Bmul_4451"/>
<dbReference type="eggNOG" id="COG2055">
    <property type="taxonomic scope" value="Bacteria"/>
</dbReference>
<dbReference type="HOGENOM" id="CLU_040452_0_0_4"/>
<dbReference type="SABIO-RK" id="A9ALD3"/>
<dbReference type="Proteomes" id="UP000008815">
    <property type="component" value="Chromosome 2"/>
</dbReference>
<dbReference type="GO" id="GO:0016491">
    <property type="term" value="F:oxidoreductase activity"/>
    <property type="evidence" value="ECO:0007669"/>
    <property type="project" value="UniProtKB-KW"/>
</dbReference>
<dbReference type="Gene3D" id="1.10.1530.10">
    <property type="match status" value="1"/>
</dbReference>
<dbReference type="Gene3D" id="3.30.1370.60">
    <property type="entry name" value="Hypothetical oxidoreductase yiak, domain 2"/>
    <property type="match status" value="1"/>
</dbReference>
<dbReference type="InterPro" id="IPR043144">
    <property type="entry name" value="Mal/L-sulf/L-lact_DH-like_ah"/>
</dbReference>
<dbReference type="InterPro" id="IPR043143">
    <property type="entry name" value="Mal/L-sulf/L-lact_DH-like_NADP"/>
</dbReference>
<dbReference type="InterPro" id="IPR036111">
    <property type="entry name" value="Mal/L-sulfo/L-lacto_DH-like_sf"/>
</dbReference>
<dbReference type="InterPro" id="IPR003767">
    <property type="entry name" value="Malate/L-lactate_DH-like"/>
</dbReference>
<dbReference type="PANTHER" id="PTHR11091:SF0">
    <property type="entry name" value="MALATE DEHYDROGENASE"/>
    <property type="match status" value="1"/>
</dbReference>
<dbReference type="PANTHER" id="PTHR11091">
    <property type="entry name" value="OXIDOREDUCTASE-RELATED"/>
    <property type="match status" value="1"/>
</dbReference>
<dbReference type="Pfam" id="PF02615">
    <property type="entry name" value="Ldh_2"/>
    <property type="match status" value="1"/>
</dbReference>
<dbReference type="SUPFAM" id="SSF89733">
    <property type="entry name" value="L-sulfolactate dehydrogenase-like"/>
    <property type="match status" value="1"/>
</dbReference>
<feature type="chain" id="PRO_0000432294" description="Delta(1)-pyrroline-2-carboxylate reductase 2">
    <location>
        <begin position="1"/>
        <end position="340"/>
    </location>
</feature>
<feature type="active site" description="Charge relay system" evidence="1">
    <location>
        <position position="50"/>
    </location>
</feature>
<feature type="active site" description="Proton donor" evidence="1">
    <location>
        <position position="51"/>
    </location>
</feature>
<feature type="active site" description="Charge relay system" evidence="1">
    <location>
        <position position="191"/>
    </location>
</feature>
<feature type="binding site" evidence="1">
    <location>
        <position position="55"/>
    </location>
    <ligand>
        <name>substrate</name>
    </ligand>
</feature>
<feature type="binding site" description="in other chain" evidence="1">
    <location>
        <begin position="123"/>
        <end position="127"/>
    </location>
    <ligand>
        <name>NADP(+)</name>
        <dbReference type="ChEBI" id="CHEBI:58349"/>
        <note>ligand shared between dimeric partners</note>
    </ligand>
</feature>
<feature type="binding site" evidence="1">
    <location>
        <position position="163"/>
    </location>
    <ligand>
        <name>substrate</name>
    </ligand>
</feature>
<feature type="binding site" description="in other chain" evidence="1">
    <location>
        <begin position="181"/>
        <end position="183"/>
    </location>
    <ligand>
        <name>NADP(+)</name>
        <dbReference type="ChEBI" id="CHEBI:58349"/>
        <note>ligand shared between dimeric partners</note>
    </ligand>
</feature>
<feature type="binding site" evidence="1">
    <location>
        <begin position="189"/>
        <end position="190"/>
    </location>
    <ligand>
        <name>substrate</name>
    </ligand>
</feature>
<feature type="binding site" evidence="1">
    <location>
        <begin position="232"/>
        <end position="233"/>
    </location>
    <ligand>
        <name>NADP(+)</name>
        <dbReference type="ChEBI" id="CHEBI:58349"/>
        <note>ligand shared between dimeric partners</note>
    </ligand>
</feature>
<feature type="binding site" description="in other chain" evidence="1">
    <location>
        <begin position="307"/>
        <end position="313"/>
    </location>
    <ligand>
        <name>NADP(+)</name>
        <dbReference type="ChEBI" id="CHEBI:58349"/>
        <note>ligand shared between dimeric partners</note>
    </ligand>
</feature>
<protein>
    <recommendedName>
        <fullName>Delta(1)-pyrroline-2-carboxylate reductase 2</fullName>
        <shortName>Pyr2C reductase 2</shortName>
        <ecNumber evidence="2">1.5.1.49</ecNumber>
    </recommendedName>
    <alternativeName>
        <fullName evidence="3">Proline ketimine reductase 2</fullName>
    </alternativeName>
</protein>
<proteinExistence type="evidence at protein level"/>